<sequence>MQQGWLSNWLVKHEVVHRSLGFDHRGIETLQIKAGDWDSIAVILYVYGYNYLRSQCAYDVAPGGSLASVYHLTRIQYGIDNPEEVCIKVFVQKDNPRIPSVFWIWRSADFQERESYDMVGISYDNHPRLKRILMPESWIGWPLRKDYITPNFYEIQDAH</sequence>
<feature type="chain" id="PRO_0000358239" description="NAD(P)H-quinone oxidoreductase subunit J, chloroplastic">
    <location>
        <begin position="1"/>
        <end position="159"/>
    </location>
</feature>
<name>NDHJ_AGRST</name>
<evidence type="ECO:0000255" key="1">
    <source>
        <dbReference type="HAMAP-Rule" id="MF_01357"/>
    </source>
</evidence>
<geneLocation type="chloroplast"/>
<organism>
    <name type="scientific">Agrostis stolonifera</name>
    <name type="common">Creeping bentgrass</name>
    <dbReference type="NCBI Taxonomy" id="63632"/>
    <lineage>
        <taxon>Eukaryota</taxon>
        <taxon>Viridiplantae</taxon>
        <taxon>Streptophyta</taxon>
        <taxon>Embryophyta</taxon>
        <taxon>Tracheophyta</taxon>
        <taxon>Spermatophyta</taxon>
        <taxon>Magnoliopsida</taxon>
        <taxon>Liliopsida</taxon>
        <taxon>Poales</taxon>
        <taxon>Poaceae</taxon>
        <taxon>BOP clade</taxon>
        <taxon>Pooideae</taxon>
        <taxon>Poodae</taxon>
        <taxon>Poeae</taxon>
        <taxon>Poeae Chloroplast Group 1 (Aveneae type)</taxon>
        <taxon>Agrostidodinae</taxon>
        <taxon>Agrostidinae</taxon>
        <taxon>Agrostis</taxon>
    </lineage>
</organism>
<accession>A1EA11</accession>
<reference key="1">
    <citation type="journal article" date="2007" name="Theor. Appl. Genet.">
        <title>Complete chloroplast genome sequences of Hordeum vulgare, Sorghum bicolor and Agrostis stolonifera, and comparative analyses with other grass genomes.</title>
        <authorList>
            <person name="Saski C."/>
            <person name="Lee S.-B."/>
            <person name="Fjellheim S."/>
            <person name="Guda C."/>
            <person name="Jansen R.K."/>
            <person name="Luo H."/>
            <person name="Tomkins J."/>
            <person name="Rognli O.A."/>
            <person name="Daniell H."/>
            <person name="Clarke J.L."/>
        </authorList>
    </citation>
    <scope>NUCLEOTIDE SEQUENCE [LARGE SCALE GENOMIC DNA]</scope>
    <source>
        <strain>cv. Penn A-4</strain>
    </source>
</reference>
<comment type="function">
    <text evidence="1">NDH shuttles electrons from NAD(P)H:plastoquinone, via FMN and iron-sulfur (Fe-S) centers, to quinones in the photosynthetic chain and possibly in a chloroplast respiratory chain. The immediate electron acceptor for the enzyme in this species is believed to be plastoquinone. Couples the redox reaction to proton translocation, and thus conserves the redox energy in a proton gradient.</text>
</comment>
<comment type="catalytic activity">
    <reaction evidence="1">
        <text>a plastoquinone + NADH + (n+1) H(+)(in) = a plastoquinol + NAD(+) + n H(+)(out)</text>
        <dbReference type="Rhea" id="RHEA:42608"/>
        <dbReference type="Rhea" id="RHEA-COMP:9561"/>
        <dbReference type="Rhea" id="RHEA-COMP:9562"/>
        <dbReference type="ChEBI" id="CHEBI:15378"/>
        <dbReference type="ChEBI" id="CHEBI:17757"/>
        <dbReference type="ChEBI" id="CHEBI:57540"/>
        <dbReference type="ChEBI" id="CHEBI:57945"/>
        <dbReference type="ChEBI" id="CHEBI:62192"/>
    </reaction>
</comment>
<comment type="catalytic activity">
    <reaction evidence="1">
        <text>a plastoquinone + NADPH + (n+1) H(+)(in) = a plastoquinol + NADP(+) + n H(+)(out)</text>
        <dbReference type="Rhea" id="RHEA:42612"/>
        <dbReference type="Rhea" id="RHEA-COMP:9561"/>
        <dbReference type="Rhea" id="RHEA-COMP:9562"/>
        <dbReference type="ChEBI" id="CHEBI:15378"/>
        <dbReference type="ChEBI" id="CHEBI:17757"/>
        <dbReference type="ChEBI" id="CHEBI:57783"/>
        <dbReference type="ChEBI" id="CHEBI:58349"/>
        <dbReference type="ChEBI" id="CHEBI:62192"/>
    </reaction>
</comment>
<comment type="subunit">
    <text evidence="1">NDH is composed of at least 16 different subunits, 5 of which are encoded in the nucleus.</text>
</comment>
<comment type="subcellular location">
    <subcellularLocation>
        <location evidence="1">Plastid</location>
        <location evidence="1">Chloroplast thylakoid membrane</location>
        <topology evidence="1">Peripheral membrane protein</topology>
        <orientation evidence="1">Stromal side</orientation>
    </subcellularLocation>
</comment>
<comment type="similarity">
    <text evidence="1">Belongs to the complex I 30 kDa subunit family.</text>
</comment>
<keyword id="KW-0150">Chloroplast</keyword>
<keyword id="KW-0472">Membrane</keyword>
<keyword id="KW-0520">NAD</keyword>
<keyword id="KW-0521">NADP</keyword>
<keyword id="KW-0934">Plastid</keyword>
<keyword id="KW-0618">Plastoquinone</keyword>
<keyword id="KW-0874">Quinone</keyword>
<keyword id="KW-0793">Thylakoid</keyword>
<keyword id="KW-1278">Translocase</keyword>
<keyword id="KW-0813">Transport</keyword>
<gene>
    <name evidence="1" type="primary">ndhJ</name>
</gene>
<protein>
    <recommendedName>
        <fullName evidence="1">NAD(P)H-quinone oxidoreductase subunit J, chloroplastic</fullName>
        <ecNumber evidence="1">7.1.1.-</ecNumber>
    </recommendedName>
    <alternativeName>
        <fullName>NAD(P)H dehydrogenase subunit J</fullName>
    </alternativeName>
    <alternativeName>
        <fullName evidence="1">NADH-plastoquinone oxidoreductase subunit J</fullName>
    </alternativeName>
</protein>
<dbReference type="EC" id="7.1.1.-" evidence="1"/>
<dbReference type="EMBL" id="EF115543">
    <property type="protein sequence ID" value="ABK79583.1"/>
    <property type="molecule type" value="Genomic_DNA"/>
</dbReference>
<dbReference type="RefSeq" id="YP_874739.1">
    <property type="nucleotide sequence ID" value="NC_008591.1"/>
</dbReference>
<dbReference type="SMR" id="A1EA11"/>
<dbReference type="GeneID" id="4524916"/>
<dbReference type="GO" id="GO:0009535">
    <property type="term" value="C:chloroplast thylakoid membrane"/>
    <property type="evidence" value="ECO:0007669"/>
    <property type="project" value="UniProtKB-SubCell"/>
</dbReference>
<dbReference type="GO" id="GO:0008137">
    <property type="term" value="F:NADH dehydrogenase (ubiquinone) activity"/>
    <property type="evidence" value="ECO:0007669"/>
    <property type="project" value="InterPro"/>
</dbReference>
<dbReference type="GO" id="GO:0048038">
    <property type="term" value="F:quinone binding"/>
    <property type="evidence" value="ECO:0007669"/>
    <property type="project" value="UniProtKB-KW"/>
</dbReference>
<dbReference type="GO" id="GO:0019684">
    <property type="term" value="P:photosynthesis, light reaction"/>
    <property type="evidence" value="ECO:0007669"/>
    <property type="project" value="UniProtKB-UniRule"/>
</dbReference>
<dbReference type="Gene3D" id="3.30.460.80">
    <property type="entry name" value="NADH:ubiquinone oxidoreductase, 30kDa subunit"/>
    <property type="match status" value="1"/>
</dbReference>
<dbReference type="HAMAP" id="MF_01357">
    <property type="entry name" value="NDH1_NuoC"/>
    <property type="match status" value="1"/>
</dbReference>
<dbReference type="InterPro" id="IPR010218">
    <property type="entry name" value="NADH_DH_suC"/>
</dbReference>
<dbReference type="InterPro" id="IPR037232">
    <property type="entry name" value="NADH_quin_OxRdtase_su_C/D-like"/>
</dbReference>
<dbReference type="InterPro" id="IPR001268">
    <property type="entry name" value="NADH_UbQ_OxRdtase_30kDa_su"/>
</dbReference>
<dbReference type="InterPro" id="IPR020396">
    <property type="entry name" value="NADH_UbQ_OxRdtase_CS"/>
</dbReference>
<dbReference type="NCBIfam" id="NF009141">
    <property type="entry name" value="PRK12494.1"/>
    <property type="match status" value="1"/>
</dbReference>
<dbReference type="PANTHER" id="PTHR10884:SF14">
    <property type="entry name" value="NADH DEHYDROGENASE [UBIQUINONE] IRON-SULFUR PROTEIN 3, MITOCHONDRIAL"/>
    <property type="match status" value="1"/>
</dbReference>
<dbReference type="PANTHER" id="PTHR10884">
    <property type="entry name" value="NADH DEHYDROGENASE UBIQUINONE IRON-SULFUR PROTEIN 3"/>
    <property type="match status" value="1"/>
</dbReference>
<dbReference type="Pfam" id="PF00329">
    <property type="entry name" value="Complex1_30kDa"/>
    <property type="match status" value="1"/>
</dbReference>
<dbReference type="SUPFAM" id="SSF143243">
    <property type="entry name" value="Nqo5-like"/>
    <property type="match status" value="1"/>
</dbReference>
<dbReference type="PROSITE" id="PS00542">
    <property type="entry name" value="COMPLEX1_30K"/>
    <property type="match status" value="1"/>
</dbReference>
<proteinExistence type="inferred from homology"/>